<accession>B7NPM9</accession>
<keyword id="KW-0067">ATP-binding</keyword>
<keyword id="KW-0418">Kinase</keyword>
<keyword id="KW-0460">Magnesium</keyword>
<keyword id="KW-0479">Metal-binding</keyword>
<keyword id="KW-0547">Nucleotide-binding</keyword>
<keyword id="KW-0784">Thiamine biosynthesis</keyword>
<keyword id="KW-0808">Transferase</keyword>
<sequence>MQVDLLSSAQSAHALHLFHKHSPLVHCMTNDVVQTFTANTLLALGASPAMVIETEEASQFAAIASALLINVGTLTQPRAQAMSAAVEQATRSQTPWTLDPVAVGALDYRRRFCVELLSHKPTAIRGNASEIMALAGVANGGRGVDTTDAAANAIPAAQTLARETGAIVVVTGEVDYVTDGHRIVGIHGGDPLMTKVVGTGCALSAVVAACCALPGDTLENIASACHWMKQAGERAVARSEGPGSFVPHFLDALWQLTQEVQA</sequence>
<protein>
    <recommendedName>
        <fullName evidence="1">Hydroxyethylthiazole kinase</fullName>
        <ecNumber evidence="1">2.7.1.50</ecNumber>
    </recommendedName>
    <alternativeName>
        <fullName evidence="1">4-methyl-5-beta-hydroxyethylthiazole kinase</fullName>
        <shortName evidence="1">TH kinase</shortName>
        <shortName evidence="1">Thz kinase</shortName>
    </alternativeName>
</protein>
<reference key="1">
    <citation type="journal article" date="2009" name="PLoS Genet.">
        <title>Organised genome dynamics in the Escherichia coli species results in highly diverse adaptive paths.</title>
        <authorList>
            <person name="Touchon M."/>
            <person name="Hoede C."/>
            <person name="Tenaillon O."/>
            <person name="Barbe V."/>
            <person name="Baeriswyl S."/>
            <person name="Bidet P."/>
            <person name="Bingen E."/>
            <person name="Bonacorsi S."/>
            <person name="Bouchier C."/>
            <person name="Bouvet O."/>
            <person name="Calteau A."/>
            <person name="Chiapello H."/>
            <person name="Clermont O."/>
            <person name="Cruveiller S."/>
            <person name="Danchin A."/>
            <person name="Diard M."/>
            <person name="Dossat C."/>
            <person name="Karoui M.E."/>
            <person name="Frapy E."/>
            <person name="Garry L."/>
            <person name="Ghigo J.M."/>
            <person name="Gilles A.M."/>
            <person name="Johnson J."/>
            <person name="Le Bouguenec C."/>
            <person name="Lescat M."/>
            <person name="Mangenot S."/>
            <person name="Martinez-Jehanne V."/>
            <person name="Matic I."/>
            <person name="Nassif X."/>
            <person name="Oztas S."/>
            <person name="Petit M.A."/>
            <person name="Pichon C."/>
            <person name="Rouy Z."/>
            <person name="Ruf C.S."/>
            <person name="Schneider D."/>
            <person name="Tourret J."/>
            <person name="Vacherie B."/>
            <person name="Vallenet D."/>
            <person name="Medigue C."/>
            <person name="Rocha E.P.C."/>
            <person name="Denamur E."/>
        </authorList>
    </citation>
    <scope>NUCLEOTIDE SEQUENCE [LARGE SCALE GENOMIC DNA]</scope>
    <source>
        <strain>IAI39 / ExPEC</strain>
    </source>
</reference>
<gene>
    <name evidence="1" type="primary">thiM</name>
    <name type="ordered locus">ECIAI39_0913</name>
</gene>
<comment type="function">
    <text evidence="1">Catalyzes the phosphorylation of the hydroxyl group of 4-methyl-5-beta-hydroxyethylthiazole (THZ).</text>
</comment>
<comment type="catalytic activity">
    <reaction evidence="1">
        <text>5-(2-hydroxyethyl)-4-methylthiazole + ATP = 4-methyl-5-(2-phosphooxyethyl)-thiazole + ADP + H(+)</text>
        <dbReference type="Rhea" id="RHEA:24212"/>
        <dbReference type="ChEBI" id="CHEBI:15378"/>
        <dbReference type="ChEBI" id="CHEBI:17957"/>
        <dbReference type="ChEBI" id="CHEBI:30616"/>
        <dbReference type="ChEBI" id="CHEBI:58296"/>
        <dbReference type="ChEBI" id="CHEBI:456216"/>
        <dbReference type="EC" id="2.7.1.50"/>
    </reaction>
</comment>
<comment type="cofactor">
    <cofactor evidence="1">
        <name>Mg(2+)</name>
        <dbReference type="ChEBI" id="CHEBI:18420"/>
    </cofactor>
</comment>
<comment type="pathway">
    <text evidence="1">Cofactor biosynthesis; thiamine diphosphate biosynthesis; 4-methyl-5-(2-phosphoethyl)-thiazole from 5-(2-hydroxyethyl)-4-methylthiazole: step 1/1.</text>
</comment>
<comment type="similarity">
    <text evidence="1">Belongs to the Thz kinase family.</text>
</comment>
<organism>
    <name type="scientific">Escherichia coli O7:K1 (strain IAI39 / ExPEC)</name>
    <dbReference type="NCBI Taxonomy" id="585057"/>
    <lineage>
        <taxon>Bacteria</taxon>
        <taxon>Pseudomonadati</taxon>
        <taxon>Pseudomonadota</taxon>
        <taxon>Gammaproteobacteria</taxon>
        <taxon>Enterobacterales</taxon>
        <taxon>Enterobacteriaceae</taxon>
        <taxon>Escherichia</taxon>
    </lineage>
</organism>
<feature type="chain" id="PRO_1000198123" description="Hydroxyethylthiazole kinase">
    <location>
        <begin position="1"/>
        <end position="262"/>
    </location>
</feature>
<feature type="binding site" evidence="1">
    <location>
        <position position="50"/>
    </location>
    <ligand>
        <name>substrate</name>
    </ligand>
</feature>
<feature type="binding site" evidence="1">
    <location>
        <position position="125"/>
    </location>
    <ligand>
        <name>ATP</name>
        <dbReference type="ChEBI" id="CHEBI:30616"/>
    </ligand>
</feature>
<feature type="binding site" evidence="1">
    <location>
        <position position="171"/>
    </location>
    <ligand>
        <name>ATP</name>
        <dbReference type="ChEBI" id="CHEBI:30616"/>
    </ligand>
</feature>
<feature type="binding site" evidence="1">
    <location>
        <position position="198"/>
    </location>
    <ligand>
        <name>substrate</name>
    </ligand>
</feature>
<proteinExistence type="inferred from homology"/>
<dbReference type="EC" id="2.7.1.50" evidence="1"/>
<dbReference type="EMBL" id="CU928164">
    <property type="protein sequence ID" value="CAR17050.1"/>
    <property type="molecule type" value="Genomic_DNA"/>
</dbReference>
<dbReference type="RefSeq" id="WP_001195577.1">
    <property type="nucleotide sequence ID" value="NC_011750.1"/>
</dbReference>
<dbReference type="RefSeq" id="YP_002406935.1">
    <property type="nucleotide sequence ID" value="NC_011750.1"/>
</dbReference>
<dbReference type="SMR" id="B7NPM9"/>
<dbReference type="STRING" id="585057.ECIAI39_0913"/>
<dbReference type="KEGG" id="ect:ECIAI39_0913"/>
<dbReference type="PATRIC" id="fig|585057.6.peg.963"/>
<dbReference type="HOGENOM" id="CLU_019943_0_1_6"/>
<dbReference type="UniPathway" id="UPA00060">
    <property type="reaction ID" value="UER00139"/>
</dbReference>
<dbReference type="Proteomes" id="UP000000749">
    <property type="component" value="Chromosome"/>
</dbReference>
<dbReference type="GO" id="GO:0005524">
    <property type="term" value="F:ATP binding"/>
    <property type="evidence" value="ECO:0007669"/>
    <property type="project" value="UniProtKB-UniRule"/>
</dbReference>
<dbReference type="GO" id="GO:0004417">
    <property type="term" value="F:hydroxyethylthiazole kinase activity"/>
    <property type="evidence" value="ECO:0007669"/>
    <property type="project" value="UniProtKB-UniRule"/>
</dbReference>
<dbReference type="GO" id="GO:0000287">
    <property type="term" value="F:magnesium ion binding"/>
    <property type="evidence" value="ECO:0007669"/>
    <property type="project" value="UniProtKB-UniRule"/>
</dbReference>
<dbReference type="GO" id="GO:0009228">
    <property type="term" value="P:thiamine biosynthetic process"/>
    <property type="evidence" value="ECO:0007669"/>
    <property type="project" value="UniProtKB-KW"/>
</dbReference>
<dbReference type="GO" id="GO:0009229">
    <property type="term" value="P:thiamine diphosphate biosynthetic process"/>
    <property type="evidence" value="ECO:0007669"/>
    <property type="project" value="UniProtKB-UniRule"/>
</dbReference>
<dbReference type="CDD" id="cd01170">
    <property type="entry name" value="THZ_kinase"/>
    <property type="match status" value="1"/>
</dbReference>
<dbReference type="FunFam" id="3.40.1190.20:FF:000015">
    <property type="entry name" value="Hydroxyethylthiazole kinase"/>
    <property type="match status" value="1"/>
</dbReference>
<dbReference type="Gene3D" id="3.40.1190.20">
    <property type="match status" value="1"/>
</dbReference>
<dbReference type="HAMAP" id="MF_00228">
    <property type="entry name" value="Thz_kinase"/>
    <property type="match status" value="1"/>
</dbReference>
<dbReference type="InterPro" id="IPR000417">
    <property type="entry name" value="Hyethyz_kinase"/>
</dbReference>
<dbReference type="InterPro" id="IPR029056">
    <property type="entry name" value="Ribokinase-like"/>
</dbReference>
<dbReference type="NCBIfam" id="NF006830">
    <property type="entry name" value="PRK09355.1"/>
    <property type="match status" value="1"/>
</dbReference>
<dbReference type="NCBIfam" id="TIGR00694">
    <property type="entry name" value="thiM"/>
    <property type="match status" value="1"/>
</dbReference>
<dbReference type="Pfam" id="PF02110">
    <property type="entry name" value="HK"/>
    <property type="match status" value="1"/>
</dbReference>
<dbReference type="PIRSF" id="PIRSF000513">
    <property type="entry name" value="Thz_kinase"/>
    <property type="match status" value="1"/>
</dbReference>
<dbReference type="PRINTS" id="PR01099">
    <property type="entry name" value="HYETHTZKNASE"/>
</dbReference>
<dbReference type="SUPFAM" id="SSF53613">
    <property type="entry name" value="Ribokinase-like"/>
    <property type="match status" value="1"/>
</dbReference>
<name>THIM_ECO7I</name>
<evidence type="ECO:0000255" key="1">
    <source>
        <dbReference type="HAMAP-Rule" id="MF_00228"/>
    </source>
</evidence>